<feature type="chain" id="PRO_0000152249" description="Glutamine-dependent NAD(+) synthetase">
    <location>
        <begin position="1"/>
        <end position="787"/>
    </location>
</feature>
<feature type="domain" description="CN hydrolase" evidence="4">
    <location>
        <begin position="5"/>
        <end position="275"/>
    </location>
</feature>
<feature type="region of interest" description="Ligase">
    <location>
        <begin position="325"/>
        <end position="787"/>
    </location>
</feature>
<feature type="active site" description="Proton acceptor; for glutaminase activity" evidence="2">
    <location>
        <position position="45"/>
    </location>
</feature>
<feature type="active site" description="For glutaminase activity" evidence="2">
    <location>
        <position position="114"/>
    </location>
</feature>
<feature type="active site" description="Nucleophile; for glutaminase activity" evidence="2">
    <location>
        <position position="175"/>
    </location>
</feature>
<feature type="active site" evidence="1">
    <location>
        <position position="357"/>
    </location>
</feature>
<feature type="binding site" evidence="1">
    <location>
        <begin position="355"/>
        <end position="362"/>
    </location>
    <ligand>
        <name>ATP</name>
        <dbReference type="ChEBI" id="CHEBI:30616"/>
    </ligand>
</feature>
<feature type="modified residue" description="Phosphoserine" evidence="5">
    <location>
        <position position="703"/>
    </location>
</feature>
<feature type="sequence conflict" description="In Ref. 3; AAN71229." evidence="7" ref="3">
    <original>A</original>
    <variation>V</variation>
    <location>
        <position position="247"/>
    </location>
</feature>
<dbReference type="EC" id="6.3.5.1" evidence="3"/>
<dbReference type="EMBL" id="AE014298">
    <property type="protein sequence ID" value="AAF48303.1"/>
    <property type="molecule type" value="Genomic_DNA"/>
</dbReference>
<dbReference type="EMBL" id="AE014298">
    <property type="protein sequence ID" value="AAN09333.1"/>
    <property type="molecule type" value="Genomic_DNA"/>
</dbReference>
<dbReference type="EMBL" id="BT001474">
    <property type="protein sequence ID" value="AAN71229.1"/>
    <property type="molecule type" value="mRNA"/>
</dbReference>
<dbReference type="RefSeq" id="NP_001285224.1">
    <property type="nucleotide sequence ID" value="NM_001298295.1"/>
</dbReference>
<dbReference type="RefSeq" id="NP_572913.1">
    <property type="nucleotide sequence ID" value="NM_132685.2"/>
</dbReference>
<dbReference type="RefSeq" id="NP_727727.1">
    <property type="nucleotide sequence ID" value="NM_167378.2"/>
</dbReference>
<dbReference type="SMR" id="Q9VYA0"/>
<dbReference type="BioGRID" id="58705">
    <property type="interactions" value="2"/>
</dbReference>
<dbReference type="FunCoup" id="Q9VYA0">
    <property type="interactions" value="1441"/>
</dbReference>
<dbReference type="IntAct" id="Q9VYA0">
    <property type="interactions" value="1"/>
</dbReference>
<dbReference type="STRING" id="7227.FBpp0073675"/>
<dbReference type="iPTMnet" id="Q9VYA0"/>
<dbReference type="PaxDb" id="7227-FBpp0073675"/>
<dbReference type="DNASU" id="32328"/>
<dbReference type="EnsemblMetazoa" id="FBtr0073844">
    <property type="protein sequence ID" value="FBpp0073675"/>
    <property type="gene ID" value="FBgn0030512"/>
</dbReference>
<dbReference type="EnsemblMetazoa" id="FBtr0073845">
    <property type="protein sequence ID" value="FBpp0073676"/>
    <property type="gene ID" value="FBgn0030512"/>
</dbReference>
<dbReference type="EnsemblMetazoa" id="FBtr0343352">
    <property type="protein sequence ID" value="FBpp0310009"/>
    <property type="gene ID" value="FBgn0030512"/>
</dbReference>
<dbReference type="GeneID" id="32328"/>
<dbReference type="KEGG" id="dme:Dmel_CG9940"/>
<dbReference type="UCSC" id="CG9940-RA">
    <property type="organism name" value="d. melanogaster"/>
</dbReference>
<dbReference type="AGR" id="FB:FBgn0030512"/>
<dbReference type="CTD" id="32328"/>
<dbReference type="FlyBase" id="FBgn0030512">
    <property type="gene designation" value="Nadsyn"/>
</dbReference>
<dbReference type="VEuPathDB" id="VectorBase:FBgn0030512"/>
<dbReference type="eggNOG" id="KOG2303">
    <property type="taxonomic scope" value="Eukaryota"/>
</dbReference>
<dbReference type="GeneTree" id="ENSGT00390000010152"/>
<dbReference type="HOGENOM" id="CLU_011884_2_0_1"/>
<dbReference type="InParanoid" id="Q9VYA0"/>
<dbReference type="OMA" id="TSQEVCN"/>
<dbReference type="OrthoDB" id="2020662at2759"/>
<dbReference type="PhylomeDB" id="Q9VYA0"/>
<dbReference type="Reactome" id="R-DME-196807">
    <property type="pathway name" value="Nicotinate metabolism"/>
</dbReference>
<dbReference type="UniPathway" id="UPA00253">
    <property type="reaction ID" value="UER00334"/>
</dbReference>
<dbReference type="BioGRID-ORCS" id="32328">
    <property type="hits" value="0 hits in 1 CRISPR screen"/>
</dbReference>
<dbReference type="GenomeRNAi" id="32328"/>
<dbReference type="PRO" id="PR:Q9VYA0"/>
<dbReference type="Proteomes" id="UP000000803">
    <property type="component" value="Chromosome X"/>
</dbReference>
<dbReference type="Bgee" id="FBgn0030512">
    <property type="expression patterns" value="Expressed in adult Malpighian tubule principal cell of initial segment in Malpighian tubule and 231 other cell types or tissues"/>
</dbReference>
<dbReference type="ExpressionAtlas" id="Q9VYA0">
    <property type="expression patterns" value="baseline and differential"/>
</dbReference>
<dbReference type="GO" id="GO:0005737">
    <property type="term" value="C:cytoplasm"/>
    <property type="evidence" value="ECO:0000318"/>
    <property type="project" value="GO_Central"/>
</dbReference>
<dbReference type="GO" id="GO:0005524">
    <property type="term" value="F:ATP binding"/>
    <property type="evidence" value="ECO:0007669"/>
    <property type="project" value="UniProtKB-KW"/>
</dbReference>
<dbReference type="GO" id="GO:0004359">
    <property type="term" value="F:glutaminase activity"/>
    <property type="evidence" value="ECO:0000318"/>
    <property type="project" value="GO_Central"/>
</dbReference>
<dbReference type="GO" id="GO:0003952">
    <property type="term" value="F:NAD+ synthase (glutamine-hydrolyzing) activity"/>
    <property type="evidence" value="ECO:0000314"/>
    <property type="project" value="FlyBase"/>
</dbReference>
<dbReference type="GO" id="GO:0009435">
    <property type="term" value="P:NAD biosynthetic process"/>
    <property type="evidence" value="ECO:0000318"/>
    <property type="project" value="GO_Central"/>
</dbReference>
<dbReference type="GO" id="GO:0034355">
    <property type="term" value="P:NAD biosynthetic process via the salvage pathway"/>
    <property type="evidence" value="ECO:0000315"/>
    <property type="project" value="FlyBase"/>
</dbReference>
<dbReference type="GO" id="GO:1900074">
    <property type="term" value="P:negative regulation of neuromuscular synaptic transmission"/>
    <property type="evidence" value="ECO:0000315"/>
    <property type="project" value="FlyBase"/>
</dbReference>
<dbReference type="CDD" id="cd07570">
    <property type="entry name" value="GAT_Gln-NAD-synth"/>
    <property type="match status" value="1"/>
</dbReference>
<dbReference type="CDD" id="cd00553">
    <property type="entry name" value="NAD_synthase"/>
    <property type="match status" value="1"/>
</dbReference>
<dbReference type="FunFam" id="3.40.50.620:FF:000036">
    <property type="entry name" value="Glutamine-dependent NAD(+) synthetase"/>
    <property type="match status" value="1"/>
</dbReference>
<dbReference type="FunFam" id="3.60.110.10:FF:000003">
    <property type="entry name" value="Glutamine-dependent NAD(+) synthetase"/>
    <property type="match status" value="1"/>
</dbReference>
<dbReference type="Gene3D" id="3.60.110.10">
    <property type="entry name" value="Carbon-nitrogen hydrolase"/>
    <property type="match status" value="1"/>
</dbReference>
<dbReference type="Gene3D" id="3.40.50.620">
    <property type="entry name" value="HUPs"/>
    <property type="match status" value="1"/>
</dbReference>
<dbReference type="HAMAP" id="MF_02090">
    <property type="entry name" value="NadE_glutamine_dep"/>
    <property type="match status" value="1"/>
</dbReference>
<dbReference type="InterPro" id="IPR003010">
    <property type="entry name" value="C-N_Hydrolase"/>
</dbReference>
<dbReference type="InterPro" id="IPR036526">
    <property type="entry name" value="C-N_Hydrolase_sf"/>
</dbReference>
<dbReference type="InterPro" id="IPR014445">
    <property type="entry name" value="Gln-dep_NAD_synthase"/>
</dbReference>
<dbReference type="InterPro" id="IPR022310">
    <property type="entry name" value="NAD/GMP_synthase"/>
</dbReference>
<dbReference type="InterPro" id="IPR003694">
    <property type="entry name" value="NAD_synthase"/>
</dbReference>
<dbReference type="InterPro" id="IPR014729">
    <property type="entry name" value="Rossmann-like_a/b/a_fold"/>
</dbReference>
<dbReference type="NCBIfam" id="TIGR00552">
    <property type="entry name" value="nadE"/>
    <property type="match status" value="1"/>
</dbReference>
<dbReference type="PANTHER" id="PTHR23090:SF9">
    <property type="entry name" value="GLUTAMINE-DEPENDENT NAD(+) SYNTHETASE"/>
    <property type="match status" value="1"/>
</dbReference>
<dbReference type="PANTHER" id="PTHR23090">
    <property type="entry name" value="NH 3 /GLUTAMINE-DEPENDENT NAD + SYNTHETASE"/>
    <property type="match status" value="1"/>
</dbReference>
<dbReference type="Pfam" id="PF00795">
    <property type="entry name" value="CN_hydrolase"/>
    <property type="match status" value="1"/>
</dbReference>
<dbReference type="Pfam" id="PF02540">
    <property type="entry name" value="NAD_synthase"/>
    <property type="match status" value="1"/>
</dbReference>
<dbReference type="PIRSF" id="PIRSF006630">
    <property type="entry name" value="NADS_GAT"/>
    <property type="match status" value="1"/>
</dbReference>
<dbReference type="SUPFAM" id="SSF52402">
    <property type="entry name" value="Adenine nucleotide alpha hydrolases-like"/>
    <property type="match status" value="1"/>
</dbReference>
<dbReference type="SUPFAM" id="SSF56317">
    <property type="entry name" value="Carbon-nitrogen hydrolase"/>
    <property type="match status" value="1"/>
</dbReference>
<dbReference type="PROSITE" id="PS50263">
    <property type="entry name" value="CN_HYDROLASE"/>
    <property type="match status" value="1"/>
</dbReference>
<reference key="1">
    <citation type="journal article" date="2000" name="Science">
        <title>The genome sequence of Drosophila melanogaster.</title>
        <authorList>
            <person name="Adams M.D."/>
            <person name="Celniker S.E."/>
            <person name="Holt R.A."/>
            <person name="Evans C.A."/>
            <person name="Gocayne J.D."/>
            <person name="Amanatides P.G."/>
            <person name="Scherer S.E."/>
            <person name="Li P.W."/>
            <person name="Hoskins R.A."/>
            <person name="Galle R.F."/>
            <person name="George R.A."/>
            <person name="Lewis S.E."/>
            <person name="Richards S."/>
            <person name="Ashburner M."/>
            <person name="Henderson S.N."/>
            <person name="Sutton G.G."/>
            <person name="Wortman J.R."/>
            <person name="Yandell M.D."/>
            <person name="Zhang Q."/>
            <person name="Chen L.X."/>
            <person name="Brandon R.C."/>
            <person name="Rogers Y.-H.C."/>
            <person name="Blazej R.G."/>
            <person name="Champe M."/>
            <person name="Pfeiffer B.D."/>
            <person name="Wan K.H."/>
            <person name="Doyle C."/>
            <person name="Baxter E.G."/>
            <person name="Helt G."/>
            <person name="Nelson C.R."/>
            <person name="Miklos G.L.G."/>
            <person name="Abril J.F."/>
            <person name="Agbayani A."/>
            <person name="An H.-J."/>
            <person name="Andrews-Pfannkoch C."/>
            <person name="Baldwin D."/>
            <person name="Ballew R.M."/>
            <person name="Basu A."/>
            <person name="Baxendale J."/>
            <person name="Bayraktaroglu L."/>
            <person name="Beasley E.M."/>
            <person name="Beeson K.Y."/>
            <person name="Benos P.V."/>
            <person name="Berman B.P."/>
            <person name="Bhandari D."/>
            <person name="Bolshakov S."/>
            <person name="Borkova D."/>
            <person name="Botchan M.R."/>
            <person name="Bouck J."/>
            <person name="Brokstein P."/>
            <person name="Brottier P."/>
            <person name="Burtis K.C."/>
            <person name="Busam D.A."/>
            <person name="Butler H."/>
            <person name="Cadieu E."/>
            <person name="Center A."/>
            <person name="Chandra I."/>
            <person name="Cherry J.M."/>
            <person name="Cawley S."/>
            <person name="Dahlke C."/>
            <person name="Davenport L.B."/>
            <person name="Davies P."/>
            <person name="de Pablos B."/>
            <person name="Delcher A."/>
            <person name="Deng Z."/>
            <person name="Mays A.D."/>
            <person name="Dew I."/>
            <person name="Dietz S.M."/>
            <person name="Dodson K."/>
            <person name="Doup L.E."/>
            <person name="Downes M."/>
            <person name="Dugan-Rocha S."/>
            <person name="Dunkov B.C."/>
            <person name="Dunn P."/>
            <person name="Durbin K.J."/>
            <person name="Evangelista C.C."/>
            <person name="Ferraz C."/>
            <person name="Ferriera S."/>
            <person name="Fleischmann W."/>
            <person name="Fosler C."/>
            <person name="Gabrielian A.E."/>
            <person name="Garg N.S."/>
            <person name="Gelbart W.M."/>
            <person name="Glasser K."/>
            <person name="Glodek A."/>
            <person name="Gong F."/>
            <person name="Gorrell J.H."/>
            <person name="Gu Z."/>
            <person name="Guan P."/>
            <person name="Harris M."/>
            <person name="Harris N.L."/>
            <person name="Harvey D.A."/>
            <person name="Heiman T.J."/>
            <person name="Hernandez J.R."/>
            <person name="Houck J."/>
            <person name="Hostin D."/>
            <person name="Houston K.A."/>
            <person name="Howland T.J."/>
            <person name="Wei M.-H."/>
            <person name="Ibegwam C."/>
            <person name="Jalali M."/>
            <person name="Kalush F."/>
            <person name="Karpen G.H."/>
            <person name="Ke Z."/>
            <person name="Kennison J.A."/>
            <person name="Ketchum K.A."/>
            <person name="Kimmel B.E."/>
            <person name="Kodira C.D."/>
            <person name="Kraft C.L."/>
            <person name="Kravitz S."/>
            <person name="Kulp D."/>
            <person name="Lai Z."/>
            <person name="Lasko P."/>
            <person name="Lei Y."/>
            <person name="Levitsky A.A."/>
            <person name="Li J.H."/>
            <person name="Li Z."/>
            <person name="Liang Y."/>
            <person name="Lin X."/>
            <person name="Liu X."/>
            <person name="Mattei B."/>
            <person name="McIntosh T.C."/>
            <person name="McLeod M.P."/>
            <person name="McPherson D."/>
            <person name="Merkulov G."/>
            <person name="Milshina N.V."/>
            <person name="Mobarry C."/>
            <person name="Morris J."/>
            <person name="Moshrefi A."/>
            <person name="Mount S.M."/>
            <person name="Moy M."/>
            <person name="Murphy B."/>
            <person name="Murphy L."/>
            <person name="Muzny D.M."/>
            <person name="Nelson D.L."/>
            <person name="Nelson D.R."/>
            <person name="Nelson K.A."/>
            <person name="Nixon K."/>
            <person name="Nusskern D.R."/>
            <person name="Pacleb J.M."/>
            <person name="Palazzolo M."/>
            <person name="Pittman G.S."/>
            <person name="Pan S."/>
            <person name="Pollard J."/>
            <person name="Puri V."/>
            <person name="Reese M.G."/>
            <person name="Reinert K."/>
            <person name="Remington K."/>
            <person name="Saunders R.D.C."/>
            <person name="Scheeler F."/>
            <person name="Shen H."/>
            <person name="Shue B.C."/>
            <person name="Siden-Kiamos I."/>
            <person name="Simpson M."/>
            <person name="Skupski M.P."/>
            <person name="Smith T.J."/>
            <person name="Spier E."/>
            <person name="Spradling A.C."/>
            <person name="Stapleton M."/>
            <person name="Strong R."/>
            <person name="Sun E."/>
            <person name="Svirskas R."/>
            <person name="Tector C."/>
            <person name="Turner R."/>
            <person name="Venter E."/>
            <person name="Wang A.H."/>
            <person name="Wang X."/>
            <person name="Wang Z.-Y."/>
            <person name="Wassarman D.A."/>
            <person name="Weinstock G.M."/>
            <person name="Weissenbach J."/>
            <person name="Williams S.M."/>
            <person name="Woodage T."/>
            <person name="Worley K.C."/>
            <person name="Wu D."/>
            <person name="Yang S."/>
            <person name="Yao Q.A."/>
            <person name="Ye J."/>
            <person name="Yeh R.-F."/>
            <person name="Zaveri J.S."/>
            <person name="Zhan M."/>
            <person name="Zhang G."/>
            <person name="Zhao Q."/>
            <person name="Zheng L."/>
            <person name="Zheng X.H."/>
            <person name="Zhong F.N."/>
            <person name="Zhong W."/>
            <person name="Zhou X."/>
            <person name="Zhu S.C."/>
            <person name="Zhu X."/>
            <person name="Smith H.O."/>
            <person name="Gibbs R.A."/>
            <person name="Myers E.W."/>
            <person name="Rubin G.M."/>
            <person name="Venter J.C."/>
        </authorList>
    </citation>
    <scope>NUCLEOTIDE SEQUENCE [LARGE SCALE GENOMIC DNA]</scope>
    <source>
        <strain>Berkeley</strain>
    </source>
</reference>
<reference key="2">
    <citation type="journal article" date="2002" name="Genome Biol.">
        <title>Annotation of the Drosophila melanogaster euchromatic genome: a systematic review.</title>
        <authorList>
            <person name="Misra S."/>
            <person name="Crosby M.A."/>
            <person name="Mungall C.J."/>
            <person name="Matthews B.B."/>
            <person name="Campbell K.S."/>
            <person name="Hradecky P."/>
            <person name="Huang Y."/>
            <person name="Kaminker J.S."/>
            <person name="Millburn G.H."/>
            <person name="Prochnik S.E."/>
            <person name="Smith C.D."/>
            <person name="Tupy J.L."/>
            <person name="Whitfield E.J."/>
            <person name="Bayraktaroglu L."/>
            <person name="Berman B.P."/>
            <person name="Bettencourt B.R."/>
            <person name="Celniker S.E."/>
            <person name="de Grey A.D.N.J."/>
            <person name="Drysdale R.A."/>
            <person name="Harris N.L."/>
            <person name="Richter J."/>
            <person name="Russo S."/>
            <person name="Schroeder A.J."/>
            <person name="Shu S.Q."/>
            <person name="Stapleton M."/>
            <person name="Yamada C."/>
            <person name="Ashburner M."/>
            <person name="Gelbart W.M."/>
            <person name="Rubin G.M."/>
            <person name="Lewis S.E."/>
        </authorList>
    </citation>
    <scope>GENOME REANNOTATION</scope>
    <source>
        <strain>Berkeley</strain>
    </source>
</reference>
<reference key="3">
    <citation type="journal article" date="2002" name="Genome Biol.">
        <title>A Drosophila full-length cDNA resource.</title>
        <authorList>
            <person name="Stapleton M."/>
            <person name="Carlson J.W."/>
            <person name="Brokstein P."/>
            <person name="Yu C."/>
            <person name="Champe M."/>
            <person name="George R.A."/>
            <person name="Guarin H."/>
            <person name="Kronmiller B."/>
            <person name="Pacleb J.M."/>
            <person name="Park S."/>
            <person name="Wan K.H."/>
            <person name="Rubin G.M."/>
            <person name="Celniker S.E."/>
        </authorList>
    </citation>
    <scope>NUCLEOTIDE SEQUENCE [LARGE SCALE MRNA]</scope>
    <source>
        <strain>Berkeley</strain>
        <tissue>Embryo</tissue>
    </source>
</reference>
<reference key="4">
    <citation type="journal article" date="2008" name="J. Proteome Res.">
        <title>Phosphoproteome analysis of Drosophila melanogaster embryos.</title>
        <authorList>
            <person name="Zhai B."/>
            <person name="Villen J."/>
            <person name="Beausoleil S.A."/>
            <person name="Mintseris J."/>
            <person name="Gygi S.P."/>
        </authorList>
    </citation>
    <scope>PHOSPHORYLATION [LARGE SCALE ANALYSIS] AT SER-703</scope>
    <scope>IDENTIFICATION BY MASS SPECTROMETRY</scope>
    <source>
        <tissue>Embryo</tissue>
    </source>
</reference>
<reference key="5">
    <citation type="journal article" date="2016" name="Exp. Gerontol.">
        <title>The expression of CG9940 affects the adaptation of cardiac function, mobility, and lifespan to exercise in aging Drosophila.</title>
        <authorList>
            <person name="Wen D.T."/>
            <person name="Zheng L."/>
            <person name="Ni L."/>
            <person name="Wang H."/>
            <person name="Feng Y."/>
            <person name="Zhang M."/>
        </authorList>
    </citation>
    <scope>FUNCTION</scope>
</reference>
<comment type="function">
    <text evidence="3 6">Catalyzes the ATP-dependent amidation of deamido-NAD to form NAD. Uses L-glutamine as a nitrogen source (By similarity). Because of its role in energy metabolism, involved in the modulation of aged-related cardiac function, mobility, and lifespan (PubMed:27448710).</text>
</comment>
<comment type="catalytic activity">
    <reaction evidence="3">
        <text>deamido-NAD(+) + L-glutamine + ATP + H2O = L-glutamate + AMP + diphosphate + NAD(+) + H(+)</text>
        <dbReference type="Rhea" id="RHEA:24384"/>
        <dbReference type="ChEBI" id="CHEBI:15377"/>
        <dbReference type="ChEBI" id="CHEBI:15378"/>
        <dbReference type="ChEBI" id="CHEBI:29985"/>
        <dbReference type="ChEBI" id="CHEBI:30616"/>
        <dbReference type="ChEBI" id="CHEBI:33019"/>
        <dbReference type="ChEBI" id="CHEBI:57540"/>
        <dbReference type="ChEBI" id="CHEBI:58359"/>
        <dbReference type="ChEBI" id="CHEBI:58437"/>
        <dbReference type="ChEBI" id="CHEBI:456215"/>
        <dbReference type="EC" id="6.3.5.1"/>
    </reaction>
</comment>
<comment type="pathway">
    <text evidence="3">Cofactor biosynthesis; NAD(+) biosynthesis; NAD(+) from deamido-NAD(+) (L-Gln route): step 1/1.</text>
</comment>
<comment type="similarity">
    <text evidence="7">In the C-terminal section; belongs to the NAD synthetase family.</text>
</comment>
<accession>Q9VYA0</accession>
<accession>A4V4E7</accession>
<accession>Q8IH17</accession>
<name>NADE_DROME</name>
<evidence type="ECO:0000250" key="1"/>
<evidence type="ECO:0000250" key="2">
    <source>
        <dbReference type="UniProtKB" id="P9WJJ3"/>
    </source>
</evidence>
<evidence type="ECO:0000250" key="3">
    <source>
        <dbReference type="UniProtKB" id="Q6IA69"/>
    </source>
</evidence>
<evidence type="ECO:0000255" key="4">
    <source>
        <dbReference type="PROSITE-ProRule" id="PRU00054"/>
    </source>
</evidence>
<evidence type="ECO:0000269" key="5">
    <source>
    </source>
</evidence>
<evidence type="ECO:0000269" key="6">
    <source>
    </source>
</evidence>
<evidence type="ECO:0000305" key="7"/>
<evidence type="ECO:0000312" key="8">
    <source>
        <dbReference type="FlyBase" id="FBgn0030512"/>
    </source>
</evidence>
<protein>
    <recommendedName>
        <fullName>Glutamine-dependent NAD(+) synthetase</fullName>
        <ecNumber evidence="3">6.3.5.1</ecNumber>
    </recommendedName>
    <alternativeName>
        <fullName>NAD(+) synthase [glutamine-hydrolyzing]</fullName>
    </alternativeName>
</protein>
<proteinExistence type="evidence at protein level"/>
<gene>
    <name evidence="8" type="primary">Nadsyn</name>
    <name evidence="8" type="ORF">CG9940</name>
</gene>
<organism>
    <name type="scientific">Drosophila melanogaster</name>
    <name type="common">Fruit fly</name>
    <dbReference type="NCBI Taxonomy" id="7227"/>
    <lineage>
        <taxon>Eukaryota</taxon>
        <taxon>Metazoa</taxon>
        <taxon>Ecdysozoa</taxon>
        <taxon>Arthropoda</taxon>
        <taxon>Hexapoda</taxon>
        <taxon>Insecta</taxon>
        <taxon>Pterygota</taxon>
        <taxon>Neoptera</taxon>
        <taxon>Endopterygota</taxon>
        <taxon>Diptera</taxon>
        <taxon>Brachycera</taxon>
        <taxon>Muscomorpha</taxon>
        <taxon>Ephydroidea</taxon>
        <taxon>Drosophilidae</taxon>
        <taxon>Drosophila</taxon>
        <taxon>Sophophora</taxon>
    </lineage>
</organism>
<keyword id="KW-0067">ATP-binding</keyword>
<keyword id="KW-0436">Ligase</keyword>
<keyword id="KW-0520">NAD</keyword>
<keyword id="KW-0547">Nucleotide-binding</keyword>
<keyword id="KW-0597">Phosphoprotein</keyword>
<keyword id="KW-1185">Reference proteome</keyword>
<sequence length="787" mass="87615">MGRKVTVAVSTLNQWALDFEGNMVRILQSILEAKDMGASYRTGPELEVCGYSCEDHFREPDTFLHSWEVLLEVMMSPMCENMLVDVGMPVMHRNVAYNCRVAFFNRQILLIRPKMAMCDDGNYRESRWFTAWTKALQTEEYVLPRMIAQHTGQQTVPFGDAVIATRDTCLGYEICEELWNVRSKHIEMSLAGVELIVNSSGSYMELRKAHITSDLIRNASFKAGGAYLFSNLRGCDGQRVYFNGCSAIALNGEILARSQQFALQDVEVTLATIDLEEIRAYRVSLRSRCTAAASAAEYPRIHCDFEMSTHSDIFKTSTPPLNWPMHTPEEEIALGPACWLWDYLRRSGQGGFFLPLSGGVDSSSSATIVHSMCRQIVQAVQQGDAQVLHDIRQLLADSDYTPDNAAGLCNRLLVTCYMGSVNSSKETRRRAAQLANQLGSYHIEISIDSAVNALLSIFNAVTGLTPRFRTQGGCARQNLALQNMQSRIRMVLAYIFAQLTLWVRNRPGGLLVLGSANVDESLRGYLTKYDCSSADINPIGGISKMDLRRFLTYAKDKFNLPVLESIIDAPPTAELEPLQENGELQQTDEADMGMTYAELSQFGRLRKQSFCGPYSMFCHLVATWKSDLSPKEVAEKVKHFFLCYAINRHKMTVLTPSVHAESYSPDDNRFDHRPFLYRPNWSWQFKAIDDEAEKLQPIYTPSSAQLRPSSEDLLISTQRSSHLDDSKHSSPLSSASASASIDVGISTAAVPLPGAAAPGGLSKKPSGYSKVHVNVLGKIKDRTGIPV</sequence>